<feature type="chain" id="PRO_1000019477" description="Oxygen-dependent coproporphyrinogen-III oxidase">
    <location>
        <begin position="1"/>
        <end position="348"/>
    </location>
</feature>
<feature type="region of interest" description="Important for dimerization" evidence="1">
    <location>
        <begin position="272"/>
        <end position="307"/>
    </location>
</feature>
<feature type="active site" description="Proton donor" evidence="1">
    <location>
        <position position="118"/>
    </location>
</feature>
<feature type="binding site" evidence="1">
    <location>
        <position position="104"/>
    </location>
    <ligand>
        <name>substrate</name>
    </ligand>
</feature>
<feature type="binding site" evidence="1">
    <location>
        <position position="108"/>
    </location>
    <ligand>
        <name>a divalent metal cation</name>
        <dbReference type="ChEBI" id="CHEBI:60240"/>
    </ligand>
</feature>
<feature type="binding site" evidence="1">
    <location>
        <position position="118"/>
    </location>
    <ligand>
        <name>a divalent metal cation</name>
        <dbReference type="ChEBI" id="CHEBI:60240"/>
    </ligand>
</feature>
<feature type="binding site" evidence="1">
    <location>
        <begin position="120"/>
        <end position="122"/>
    </location>
    <ligand>
        <name>substrate</name>
    </ligand>
</feature>
<feature type="binding site" evidence="1">
    <location>
        <position position="152"/>
    </location>
    <ligand>
        <name>a divalent metal cation</name>
        <dbReference type="ChEBI" id="CHEBI:60240"/>
    </ligand>
</feature>
<feature type="binding site" evidence="1">
    <location>
        <position position="182"/>
    </location>
    <ligand>
        <name>a divalent metal cation</name>
        <dbReference type="ChEBI" id="CHEBI:60240"/>
    </ligand>
</feature>
<feature type="site" description="Important for dimerization" evidence="1">
    <location>
        <position position="182"/>
    </location>
</feature>
<reference key="1">
    <citation type="journal article" date="2007" name="PLoS Genet.">
        <title>Patterns and implications of gene gain and loss in the evolution of Prochlorococcus.</title>
        <authorList>
            <person name="Kettler G.C."/>
            <person name="Martiny A.C."/>
            <person name="Huang K."/>
            <person name="Zucker J."/>
            <person name="Coleman M.L."/>
            <person name="Rodrigue S."/>
            <person name="Chen F."/>
            <person name="Lapidus A."/>
            <person name="Ferriera S."/>
            <person name="Johnson J."/>
            <person name="Steglich C."/>
            <person name="Church G.M."/>
            <person name="Richardson P."/>
            <person name="Chisholm S.W."/>
        </authorList>
    </citation>
    <scope>NUCLEOTIDE SEQUENCE [LARGE SCALE GENOMIC DNA]</scope>
    <source>
        <strain>NATL1A</strain>
    </source>
</reference>
<evidence type="ECO:0000255" key="1">
    <source>
        <dbReference type="HAMAP-Rule" id="MF_00333"/>
    </source>
</evidence>
<keyword id="KW-0149">Chlorophyll biosynthesis</keyword>
<keyword id="KW-0963">Cytoplasm</keyword>
<keyword id="KW-0350">Heme biosynthesis</keyword>
<keyword id="KW-0479">Metal-binding</keyword>
<keyword id="KW-0560">Oxidoreductase</keyword>
<keyword id="KW-0627">Porphyrin biosynthesis</keyword>
<accession>A2C524</accession>
<gene>
    <name evidence="1" type="primary">hemF</name>
    <name type="ordered locus">NATL1_20281</name>
</gene>
<sequence>MSSSQDKANLPANNSRARAKKLVLELQDEICAGLETIDGEGKFLEESWERPEGGGGRSRVLKDGKIFEQGGVNFSEVHGNELPPSIISQRPEAKGHSWFATGTSMVLHPKNPYIPTVHLNYRYFEAGPVWWFGGGADLTPFYPYLSDTRHFHSCHKNACDTIDKDLHKVFKPWCDEYFFLKHRNETRGVGGIFYDYQDGSGLLYKGQNANGKASKIAKELGEYSLNWENLFSLAKACGQAFLPSYEPIIKKRKNQSFSTKERDFQLYRRGRYAEFNLVWDRGTIFGLQTNGRTESILMSLPPLARWEYGYKPEENSREALLTDLFTKPQDWFTDKSLEKRCLTHQALD</sequence>
<organism>
    <name type="scientific">Prochlorococcus marinus (strain NATL1A)</name>
    <dbReference type="NCBI Taxonomy" id="167555"/>
    <lineage>
        <taxon>Bacteria</taxon>
        <taxon>Bacillati</taxon>
        <taxon>Cyanobacteriota</taxon>
        <taxon>Cyanophyceae</taxon>
        <taxon>Synechococcales</taxon>
        <taxon>Prochlorococcaceae</taxon>
        <taxon>Prochlorococcus</taxon>
    </lineage>
</organism>
<protein>
    <recommendedName>
        <fullName evidence="1">Oxygen-dependent coproporphyrinogen-III oxidase</fullName>
        <shortName evidence="1">CPO</shortName>
        <shortName evidence="1">Coprogen oxidase</shortName>
        <shortName evidence="1">Coproporphyrinogenase</shortName>
        <ecNumber evidence="1">1.3.3.3</ecNumber>
    </recommendedName>
</protein>
<dbReference type="EC" id="1.3.3.3" evidence="1"/>
<dbReference type="EMBL" id="CP000553">
    <property type="protein sequence ID" value="ABM76584.1"/>
    <property type="molecule type" value="Genomic_DNA"/>
</dbReference>
<dbReference type="RefSeq" id="WP_011824535.1">
    <property type="nucleotide sequence ID" value="NC_008819.1"/>
</dbReference>
<dbReference type="SMR" id="A2C524"/>
<dbReference type="KEGG" id="pme:NATL1_20281"/>
<dbReference type="eggNOG" id="COG0408">
    <property type="taxonomic scope" value="Bacteria"/>
</dbReference>
<dbReference type="HOGENOM" id="CLU_026169_0_1_3"/>
<dbReference type="UniPathway" id="UPA00251">
    <property type="reaction ID" value="UER00322"/>
</dbReference>
<dbReference type="Proteomes" id="UP000002592">
    <property type="component" value="Chromosome"/>
</dbReference>
<dbReference type="GO" id="GO:0005737">
    <property type="term" value="C:cytoplasm"/>
    <property type="evidence" value="ECO:0007669"/>
    <property type="project" value="UniProtKB-SubCell"/>
</dbReference>
<dbReference type="GO" id="GO:0004109">
    <property type="term" value="F:coproporphyrinogen oxidase activity"/>
    <property type="evidence" value="ECO:0007669"/>
    <property type="project" value="UniProtKB-UniRule"/>
</dbReference>
<dbReference type="GO" id="GO:0046872">
    <property type="term" value="F:metal ion binding"/>
    <property type="evidence" value="ECO:0007669"/>
    <property type="project" value="UniProtKB-KW"/>
</dbReference>
<dbReference type="GO" id="GO:0042803">
    <property type="term" value="F:protein homodimerization activity"/>
    <property type="evidence" value="ECO:0000250"/>
    <property type="project" value="UniProtKB"/>
</dbReference>
<dbReference type="GO" id="GO:0015995">
    <property type="term" value="P:chlorophyll biosynthetic process"/>
    <property type="evidence" value="ECO:0007669"/>
    <property type="project" value="UniProtKB-UniRule"/>
</dbReference>
<dbReference type="GO" id="GO:0006782">
    <property type="term" value="P:protoporphyrinogen IX biosynthetic process"/>
    <property type="evidence" value="ECO:0007669"/>
    <property type="project" value="UniProtKB-UniRule"/>
</dbReference>
<dbReference type="FunFam" id="3.40.1500.10:FF:000007">
    <property type="entry name" value="Oxygen-dependent coproporphyrinogen-III oxidase"/>
    <property type="match status" value="1"/>
</dbReference>
<dbReference type="Gene3D" id="3.40.1500.10">
    <property type="entry name" value="Coproporphyrinogen III oxidase, aerobic"/>
    <property type="match status" value="1"/>
</dbReference>
<dbReference type="HAMAP" id="MF_00333">
    <property type="entry name" value="Coprogen_oxidas"/>
    <property type="match status" value="1"/>
</dbReference>
<dbReference type="InterPro" id="IPR001260">
    <property type="entry name" value="Coprogen_oxidase_aer"/>
</dbReference>
<dbReference type="InterPro" id="IPR036406">
    <property type="entry name" value="Coprogen_oxidase_aer_sf"/>
</dbReference>
<dbReference type="InterPro" id="IPR018375">
    <property type="entry name" value="Coprogen_oxidase_CS"/>
</dbReference>
<dbReference type="NCBIfam" id="NF003727">
    <property type="entry name" value="PRK05330.1"/>
    <property type="match status" value="1"/>
</dbReference>
<dbReference type="PANTHER" id="PTHR10755">
    <property type="entry name" value="COPROPORPHYRINOGEN III OXIDASE, MITOCHONDRIAL"/>
    <property type="match status" value="1"/>
</dbReference>
<dbReference type="PANTHER" id="PTHR10755:SF0">
    <property type="entry name" value="OXYGEN-DEPENDENT COPROPORPHYRINOGEN-III OXIDASE, MITOCHONDRIAL"/>
    <property type="match status" value="1"/>
</dbReference>
<dbReference type="Pfam" id="PF01218">
    <property type="entry name" value="Coprogen_oxidas"/>
    <property type="match status" value="1"/>
</dbReference>
<dbReference type="PIRSF" id="PIRSF000166">
    <property type="entry name" value="Coproporphyri_ox"/>
    <property type="match status" value="1"/>
</dbReference>
<dbReference type="PRINTS" id="PR00073">
    <property type="entry name" value="COPRGNOXDASE"/>
</dbReference>
<dbReference type="SUPFAM" id="SSF102886">
    <property type="entry name" value="Coproporphyrinogen III oxidase"/>
    <property type="match status" value="1"/>
</dbReference>
<dbReference type="PROSITE" id="PS01021">
    <property type="entry name" value="COPROGEN_OXIDASE"/>
    <property type="match status" value="1"/>
</dbReference>
<name>HEM6_PROM1</name>
<proteinExistence type="inferred from homology"/>
<comment type="function">
    <text evidence="1">Involved in the heme and chlorophyll biosynthesis. Catalyzes the aerobic oxidative decarboxylation of propionate groups of rings A and B of coproporphyrinogen-III to yield the vinyl groups in protoporphyrinogen-IX.</text>
</comment>
<comment type="catalytic activity">
    <reaction evidence="1">
        <text>coproporphyrinogen III + O2 + 2 H(+) = protoporphyrinogen IX + 2 CO2 + 2 H2O</text>
        <dbReference type="Rhea" id="RHEA:18257"/>
        <dbReference type="ChEBI" id="CHEBI:15377"/>
        <dbReference type="ChEBI" id="CHEBI:15378"/>
        <dbReference type="ChEBI" id="CHEBI:15379"/>
        <dbReference type="ChEBI" id="CHEBI:16526"/>
        <dbReference type="ChEBI" id="CHEBI:57307"/>
        <dbReference type="ChEBI" id="CHEBI:57309"/>
        <dbReference type="EC" id="1.3.3.3"/>
    </reaction>
</comment>
<comment type="cofactor">
    <cofactor evidence="1">
        <name>a divalent metal cation</name>
        <dbReference type="ChEBI" id="CHEBI:60240"/>
    </cofactor>
</comment>
<comment type="pathway">
    <text evidence="1">Porphyrin-containing compound metabolism; protoporphyrin-IX biosynthesis; protoporphyrinogen-IX from coproporphyrinogen-III (O2 route): step 1/1.</text>
</comment>
<comment type="subunit">
    <text evidence="1">Homodimer.</text>
</comment>
<comment type="subcellular location">
    <subcellularLocation>
        <location evidence="1">Cytoplasm</location>
    </subcellularLocation>
</comment>
<comment type="similarity">
    <text evidence="1">Belongs to the aerobic coproporphyrinogen-III oxidase family.</text>
</comment>